<comment type="similarity">
    <text evidence="1">Belongs to the bacterial ribosomal protein bL27 family.</text>
</comment>
<feature type="chain" id="PRO_0000181061" description="Large ribosomal subunit protein bL27">
    <location>
        <begin position="1"/>
        <end position="85"/>
    </location>
</feature>
<feature type="region of interest" description="Disordered" evidence="2">
    <location>
        <begin position="1"/>
        <end position="25"/>
    </location>
</feature>
<keyword id="KW-1185">Reference proteome</keyword>
<keyword id="KW-0687">Ribonucleoprotein</keyword>
<keyword id="KW-0689">Ribosomal protein</keyword>
<evidence type="ECO:0000255" key="1">
    <source>
        <dbReference type="HAMAP-Rule" id="MF_00539"/>
    </source>
</evidence>
<evidence type="ECO:0000256" key="2">
    <source>
        <dbReference type="SAM" id="MobiDB-lite"/>
    </source>
</evidence>
<evidence type="ECO:0000305" key="3"/>
<dbReference type="EMBL" id="AE016826">
    <property type="protein sequence ID" value="AAO27070.1"/>
    <property type="molecule type" value="Genomic_DNA"/>
</dbReference>
<dbReference type="RefSeq" id="WP_011091471.1">
    <property type="nucleotide sequence ID" value="NC_004545.1"/>
</dbReference>
<dbReference type="SMR" id="P59513"/>
<dbReference type="STRING" id="224915.bbp_351"/>
<dbReference type="KEGG" id="bab:bbp_351"/>
<dbReference type="eggNOG" id="COG0211">
    <property type="taxonomic scope" value="Bacteria"/>
</dbReference>
<dbReference type="HOGENOM" id="CLU_095424_4_1_6"/>
<dbReference type="OrthoDB" id="9803474at2"/>
<dbReference type="Proteomes" id="UP000000601">
    <property type="component" value="Chromosome"/>
</dbReference>
<dbReference type="GO" id="GO:0022625">
    <property type="term" value="C:cytosolic large ribosomal subunit"/>
    <property type="evidence" value="ECO:0007669"/>
    <property type="project" value="TreeGrafter"/>
</dbReference>
<dbReference type="GO" id="GO:0003735">
    <property type="term" value="F:structural constituent of ribosome"/>
    <property type="evidence" value="ECO:0007669"/>
    <property type="project" value="InterPro"/>
</dbReference>
<dbReference type="GO" id="GO:0006412">
    <property type="term" value="P:translation"/>
    <property type="evidence" value="ECO:0007669"/>
    <property type="project" value="UniProtKB-UniRule"/>
</dbReference>
<dbReference type="FunFam" id="2.40.50.100:FF:000001">
    <property type="entry name" value="50S ribosomal protein L27"/>
    <property type="match status" value="1"/>
</dbReference>
<dbReference type="Gene3D" id="2.40.50.100">
    <property type="match status" value="1"/>
</dbReference>
<dbReference type="HAMAP" id="MF_00539">
    <property type="entry name" value="Ribosomal_bL27"/>
    <property type="match status" value="1"/>
</dbReference>
<dbReference type="InterPro" id="IPR001684">
    <property type="entry name" value="Ribosomal_bL27"/>
</dbReference>
<dbReference type="InterPro" id="IPR018261">
    <property type="entry name" value="Ribosomal_bL27_CS"/>
</dbReference>
<dbReference type="NCBIfam" id="TIGR00062">
    <property type="entry name" value="L27"/>
    <property type="match status" value="1"/>
</dbReference>
<dbReference type="PANTHER" id="PTHR15893:SF0">
    <property type="entry name" value="LARGE RIBOSOMAL SUBUNIT PROTEIN BL27M"/>
    <property type="match status" value="1"/>
</dbReference>
<dbReference type="PANTHER" id="PTHR15893">
    <property type="entry name" value="RIBOSOMAL PROTEIN L27"/>
    <property type="match status" value="1"/>
</dbReference>
<dbReference type="Pfam" id="PF01016">
    <property type="entry name" value="Ribosomal_L27"/>
    <property type="match status" value="1"/>
</dbReference>
<dbReference type="PRINTS" id="PR00063">
    <property type="entry name" value="RIBOSOMALL27"/>
</dbReference>
<dbReference type="SUPFAM" id="SSF110324">
    <property type="entry name" value="Ribosomal L27 protein-like"/>
    <property type="match status" value="1"/>
</dbReference>
<dbReference type="PROSITE" id="PS00831">
    <property type="entry name" value="RIBOSOMAL_L27"/>
    <property type="match status" value="1"/>
</dbReference>
<reference key="1">
    <citation type="journal article" date="2003" name="Proc. Natl. Acad. Sci. U.S.A.">
        <title>Reductive genome evolution in Buchnera aphidicola.</title>
        <authorList>
            <person name="van Ham R.C.H.J."/>
            <person name="Kamerbeek J."/>
            <person name="Palacios C."/>
            <person name="Rausell C."/>
            <person name="Abascal F."/>
            <person name="Bastolla U."/>
            <person name="Fernandez J.M."/>
            <person name="Jimenez L."/>
            <person name="Postigo M."/>
            <person name="Silva F.J."/>
            <person name="Tamames J."/>
            <person name="Viguera E."/>
            <person name="Latorre A."/>
            <person name="Valencia A."/>
            <person name="Moran F."/>
            <person name="Moya A."/>
        </authorList>
    </citation>
    <scope>NUCLEOTIDE SEQUENCE [LARGE SCALE GENOMIC DNA]</scope>
    <source>
        <strain>Bp</strain>
    </source>
</reference>
<sequence length="85" mass="9312">MAHKKAGGSSRNGRDSHSKRLGVKHFGGETIRSGSIIVRQRGTKFHAGNNVDCAKDHTLFATSQGKVKFEKKGKCNRTYVSIIPE</sequence>
<name>RL27_BUCBP</name>
<gene>
    <name evidence="1" type="primary">rpmA</name>
    <name type="ordered locus">bbp_351</name>
</gene>
<accession>P59513</accession>
<proteinExistence type="inferred from homology"/>
<organism>
    <name type="scientific">Buchnera aphidicola subsp. Baizongia pistaciae (strain Bp)</name>
    <dbReference type="NCBI Taxonomy" id="224915"/>
    <lineage>
        <taxon>Bacteria</taxon>
        <taxon>Pseudomonadati</taxon>
        <taxon>Pseudomonadota</taxon>
        <taxon>Gammaproteobacteria</taxon>
        <taxon>Enterobacterales</taxon>
        <taxon>Erwiniaceae</taxon>
        <taxon>Buchnera</taxon>
    </lineage>
</organism>
<protein>
    <recommendedName>
        <fullName evidence="1">Large ribosomal subunit protein bL27</fullName>
    </recommendedName>
    <alternativeName>
        <fullName evidence="3">50S ribosomal protein L27</fullName>
    </alternativeName>
</protein>